<sequence length="171" mass="20138">MDYFTLFGLPARYQLDTQALSLRFQDLQRQYHPDKFASGSQAEQLAAVQQSATINQAWQTLRHPLMRAEYLLSLHGFDLASEQHTVRDTAFLMEQLELREELDEIEQAKDEARLESFIKRVKKMFDTRHQLMVEQLDNETWDAAADTVRKLRFLDKLRSSAEQLEEKLLDF</sequence>
<organism>
    <name type="scientific">Escherichia fergusonii (strain ATCC 35469 / DSM 13698 / CCUG 18766 / IAM 14443 / JCM 21226 / LMG 7866 / NBRC 102419 / NCTC 12128 / CDC 0568-73)</name>
    <dbReference type="NCBI Taxonomy" id="585054"/>
    <lineage>
        <taxon>Bacteria</taxon>
        <taxon>Pseudomonadati</taxon>
        <taxon>Pseudomonadota</taxon>
        <taxon>Gammaproteobacteria</taxon>
        <taxon>Enterobacterales</taxon>
        <taxon>Enterobacteriaceae</taxon>
        <taxon>Escherichia</taxon>
    </lineage>
</organism>
<keyword id="KW-0143">Chaperone</keyword>
<dbReference type="EMBL" id="CU928158">
    <property type="protein sequence ID" value="CAQ88189.1"/>
    <property type="molecule type" value="Genomic_DNA"/>
</dbReference>
<dbReference type="RefSeq" id="WP_000384413.1">
    <property type="nucleotide sequence ID" value="NC_011740.1"/>
</dbReference>
<dbReference type="SMR" id="B7LKB2"/>
<dbReference type="GeneID" id="75172640"/>
<dbReference type="KEGG" id="efe:EFER_0645"/>
<dbReference type="HOGENOM" id="CLU_068529_2_0_6"/>
<dbReference type="OrthoDB" id="287587at2"/>
<dbReference type="Proteomes" id="UP000000745">
    <property type="component" value="Chromosome"/>
</dbReference>
<dbReference type="GO" id="GO:1990230">
    <property type="term" value="C:iron-sulfur cluster transfer complex"/>
    <property type="evidence" value="ECO:0007669"/>
    <property type="project" value="TreeGrafter"/>
</dbReference>
<dbReference type="GO" id="GO:0001671">
    <property type="term" value="F:ATPase activator activity"/>
    <property type="evidence" value="ECO:0007669"/>
    <property type="project" value="InterPro"/>
</dbReference>
<dbReference type="GO" id="GO:0051087">
    <property type="term" value="F:protein-folding chaperone binding"/>
    <property type="evidence" value="ECO:0007669"/>
    <property type="project" value="InterPro"/>
</dbReference>
<dbReference type="GO" id="GO:0044571">
    <property type="term" value="P:[2Fe-2S] cluster assembly"/>
    <property type="evidence" value="ECO:0007669"/>
    <property type="project" value="InterPro"/>
</dbReference>
<dbReference type="GO" id="GO:0051259">
    <property type="term" value="P:protein complex oligomerization"/>
    <property type="evidence" value="ECO:0007669"/>
    <property type="project" value="InterPro"/>
</dbReference>
<dbReference type="GO" id="GO:0006457">
    <property type="term" value="P:protein folding"/>
    <property type="evidence" value="ECO:0007669"/>
    <property type="project" value="UniProtKB-UniRule"/>
</dbReference>
<dbReference type="CDD" id="cd06257">
    <property type="entry name" value="DnaJ"/>
    <property type="match status" value="1"/>
</dbReference>
<dbReference type="FunFam" id="1.10.287.110:FF:000008">
    <property type="entry name" value="Co-chaperone protein HscB"/>
    <property type="match status" value="1"/>
</dbReference>
<dbReference type="FunFam" id="1.20.1280.20:FF:000001">
    <property type="entry name" value="Co-chaperone protein HscB"/>
    <property type="match status" value="1"/>
</dbReference>
<dbReference type="Gene3D" id="1.10.287.110">
    <property type="entry name" value="DnaJ domain"/>
    <property type="match status" value="1"/>
</dbReference>
<dbReference type="Gene3D" id="1.20.1280.20">
    <property type="entry name" value="HscB, C-terminal domain"/>
    <property type="match status" value="1"/>
</dbReference>
<dbReference type="HAMAP" id="MF_00682">
    <property type="entry name" value="HscB"/>
    <property type="match status" value="1"/>
</dbReference>
<dbReference type="InterPro" id="IPR001623">
    <property type="entry name" value="DnaJ_domain"/>
</dbReference>
<dbReference type="InterPro" id="IPR004640">
    <property type="entry name" value="HscB"/>
</dbReference>
<dbReference type="InterPro" id="IPR036386">
    <property type="entry name" value="HscB_C_sf"/>
</dbReference>
<dbReference type="InterPro" id="IPR009073">
    <property type="entry name" value="HscB_oligo_C"/>
</dbReference>
<dbReference type="InterPro" id="IPR036869">
    <property type="entry name" value="J_dom_sf"/>
</dbReference>
<dbReference type="NCBIfam" id="TIGR00714">
    <property type="entry name" value="hscB"/>
    <property type="match status" value="1"/>
</dbReference>
<dbReference type="NCBIfam" id="NF003449">
    <property type="entry name" value="PRK05014.1"/>
    <property type="match status" value="1"/>
</dbReference>
<dbReference type="PANTHER" id="PTHR14021">
    <property type="entry name" value="IRON-SULFUR CLUSTER CO-CHAPERONE PROTEIN HSCB"/>
    <property type="match status" value="1"/>
</dbReference>
<dbReference type="PANTHER" id="PTHR14021:SF15">
    <property type="entry name" value="IRON-SULFUR CLUSTER CO-CHAPERONE PROTEIN HSCB"/>
    <property type="match status" value="1"/>
</dbReference>
<dbReference type="Pfam" id="PF07743">
    <property type="entry name" value="HSCB_C"/>
    <property type="match status" value="1"/>
</dbReference>
<dbReference type="SMART" id="SM00271">
    <property type="entry name" value="DnaJ"/>
    <property type="match status" value="1"/>
</dbReference>
<dbReference type="SUPFAM" id="SSF46565">
    <property type="entry name" value="Chaperone J-domain"/>
    <property type="match status" value="1"/>
</dbReference>
<dbReference type="SUPFAM" id="SSF47144">
    <property type="entry name" value="HSC20 (HSCB), C-terminal oligomerisation domain"/>
    <property type="match status" value="1"/>
</dbReference>
<dbReference type="PROSITE" id="PS50076">
    <property type="entry name" value="DNAJ_2"/>
    <property type="match status" value="1"/>
</dbReference>
<evidence type="ECO:0000255" key="1">
    <source>
        <dbReference type="HAMAP-Rule" id="MF_00682"/>
    </source>
</evidence>
<proteinExistence type="inferred from homology"/>
<name>HSCB_ESCF3</name>
<reference key="1">
    <citation type="journal article" date="2009" name="PLoS Genet.">
        <title>Organised genome dynamics in the Escherichia coli species results in highly diverse adaptive paths.</title>
        <authorList>
            <person name="Touchon M."/>
            <person name="Hoede C."/>
            <person name="Tenaillon O."/>
            <person name="Barbe V."/>
            <person name="Baeriswyl S."/>
            <person name="Bidet P."/>
            <person name="Bingen E."/>
            <person name="Bonacorsi S."/>
            <person name="Bouchier C."/>
            <person name="Bouvet O."/>
            <person name="Calteau A."/>
            <person name="Chiapello H."/>
            <person name="Clermont O."/>
            <person name="Cruveiller S."/>
            <person name="Danchin A."/>
            <person name="Diard M."/>
            <person name="Dossat C."/>
            <person name="Karoui M.E."/>
            <person name="Frapy E."/>
            <person name="Garry L."/>
            <person name="Ghigo J.M."/>
            <person name="Gilles A.M."/>
            <person name="Johnson J."/>
            <person name="Le Bouguenec C."/>
            <person name="Lescat M."/>
            <person name="Mangenot S."/>
            <person name="Martinez-Jehanne V."/>
            <person name="Matic I."/>
            <person name="Nassif X."/>
            <person name="Oztas S."/>
            <person name="Petit M.A."/>
            <person name="Pichon C."/>
            <person name="Rouy Z."/>
            <person name="Ruf C.S."/>
            <person name="Schneider D."/>
            <person name="Tourret J."/>
            <person name="Vacherie B."/>
            <person name="Vallenet D."/>
            <person name="Medigue C."/>
            <person name="Rocha E.P.C."/>
            <person name="Denamur E."/>
        </authorList>
    </citation>
    <scope>NUCLEOTIDE SEQUENCE [LARGE SCALE GENOMIC DNA]</scope>
    <source>
        <strain>ATCC 35469 / DSM 13698 / BCRC 15582 / CCUG 18766 / IAM 14443 / JCM 21226 / LMG 7866 / NBRC 102419 / NCTC 12128 / CDC 0568-73</strain>
    </source>
</reference>
<feature type="chain" id="PRO_1000131740" description="Co-chaperone protein HscB">
    <location>
        <begin position="1"/>
        <end position="171"/>
    </location>
</feature>
<feature type="domain" description="J" evidence="1">
    <location>
        <begin position="2"/>
        <end position="74"/>
    </location>
</feature>
<gene>
    <name evidence="1" type="primary">hscB</name>
    <name type="ordered locus">EFER_0645</name>
</gene>
<protein>
    <recommendedName>
        <fullName evidence="1">Co-chaperone protein HscB</fullName>
    </recommendedName>
    <alternativeName>
        <fullName evidence="1">Hsc20</fullName>
    </alternativeName>
</protein>
<accession>B7LKB2</accession>
<comment type="function">
    <text evidence="1">Co-chaperone involved in the maturation of iron-sulfur cluster-containing proteins. Seems to help targeting proteins to be folded toward HscA.</text>
</comment>
<comment type="subunit">
    <text evidence="1">Interacts with HscA and stimulates its ATPase activity. Interacts with IscU.</text>
</comment>
<comment type="similarity">
    <text evidence="1">Belongs to the HscB family.</text>
</comment>